<comment type="function">
    <text evidence="1">Involved in the biosynthesis of the osmoprotectant glycine betaine. Catalyzes the irreversible oxidation of betaine aldehyde to the corresponding acid.</text>
</comment>
<comment type="catalytic activity">
    <reaction evidence="1">
        <text>betaine aldehyde + NAD(+) + H2O = glycine betaine + NADH + 2 H(+)</text>
        <dbReference type="Rhea" id="RHEA:15305"/>
        <dbReference type="ChEBI" id="CHEBI:15377"/>
        <dbReference type="ChEBI" id="CHEBI:15378"/>
        <dbReference type="ChEBI" id="CHEBI:15710"/>
        <dbReference type="ChEBI" id="CHEBI:17750"/>
        <dbReference type="ChEBI" id="CHEBI:57540"/>
        <dbReference type="ChEBI" id="CHEBI:57945"/>
        <dbReference type="EC" id="1.2.1.8"/>
    </reaction>
    <physiologicalReaction direction="left-to-right" evidence="1">
        <dbReference type="Rhea" id="RHEA:15306"/>
    </physiologicalReaction>
</comment>
<comment type="cofactor">
    <cofactor evidence="1">
        <name>K(+)</name>
        <dbReference type="ChEBI" id="CHEBI:29103"/>
    </cofactor>
    <text evidence="1">Binds 2 potassium ions per subunit.</text>
</comment>
<comment type="pathway">
    <text evidence="1">Amine and polyamine biosynthesis; betaine biosynthesis via choline pathway; betaine from betaine aldehyde: step 1/1.</text>
</comment>
<comment type="subunit">
    <text evidence="1">Dimer of dimers.</text>
</comment>
<comment type="similarity">
    <text evidence="1">Belongs to the aldehyde dehydrogenase family.</text>
</comment>
<feature type="chain" id="PRO_1000083707" description="Betaine aldehyde dehydrogenase">
    <location>
        <begin position="1"/>
        <end position="487"/>
    </location>
</feature>
<feature type="active site" description="Charge relay system" evidence="1">
    <location>
        <position position="161"/>
    </location>
</feature>
<feature type="active site" description="Proton acceptor" evidence="1">
    <location>
        <position position="249"/>
    </location>
</feature>
<feature type="active site" description="Nucleophile" evidence="1">
    <location>
        <position position="283"/>
    </location>
</feature>
<feature type="active site" description="Charge relay system" evidence="1">
    <location>
        <position position="461"/>
    </location>
</feature>
<feature type="binding site" evidence="1">
    <location>
        <position position="27"/>
    </location>
    <ligand>
        <name>K(+)</name>
        <dbReference type="ChEBI" id="CHEBI:29103"/>
        <label>1</label>
    </ligand>
</feature>
<feature type="binding site" evidence="1">
    <location>
        <position position="93"/>
    </location>
    <ligand>
        <name>K(+)</name>
        <dbReference type="ChEBI" id="CHEBI:29103"/>
        <label>1</label>
    </ligand>
</feature>
<feature type="binding site" evidence="1">
    <location>
        <begin position="149"/>
        <end position="151"/>
    </location>
    <ligand>
        <name>NAD(+)</name>
        <dbReference type="ChEBI" id="CHEBI:57540"/>
    </ligand>
</feature>
<feature type="binding site" evidence="1">
    <location>
        <begin position="175"/>
        <end position="178"/>
    </location>
    <ligand>
        <name>NAD(+)</name>
        <dbReference type="ChEBI" id="CHEBI:57540"/>
    </ligand>
</feature>
<feature type="binding site" evidence="1">
    <location>
        <begin position="228"/>
        <end position="231"/>
    </location>
    <ligand>
        <name>NAD(+)</name>
        <dbReference type="ChEBI" id="CHEBI:57540"/>
    </ligand>
</feature>
<feature type="binding site" evidence="1">
    <location>
        <position position="243"/>
    </location>
    <ligand>
        <name>K(+)</name>
        <dbReference type="ChEBI" id="CHEBI:29103"/>
        <label>2</label>
    </ligand>
</feature>
<feature type="binding site" evidence="1">
    <location>
        <position position="251"/>
    </location>
    <ligand>
        <name>NAD(+)</name>
        <dbReference type="ChEBI" id="CHEBI:57540"/>
    </ligand>
</feature>
<feature type="binding site" description="covalent" evidence="1">
    <location>
        <position position="283"/>
    </location>
    <ligand>
        <name>NAD(+)</name>
        <dbReference type="ChEBI" id="CHEBI:57540"/>
    </ligand>
</feature>
<feature type="binding site" evidence="1">
    <location>
        <position position="384"/>
    </location>
    <ligand>
        <name>NAD(+)</name>
        <dbReference type="ChEBI" id="CHEBI:57540"/>
    </ligand>
</feature>
<feature type="binding site" evidence="1">
    <location>
        <position position="454"/>
    </location>
    <ligand>
        <name>K(+)</name>
        <dbReference type="ChEBI" id="CHEBI:29103"/>
        <label>2</label>
    </ligand>
</feature>
<feature type="binding site" evidence="1">
    <location>
        <position position="457"/>
    </location>
    <ligand>
        <name>K(+)</name>
        <dbReference type="ChEBI" id="CHEBI:29103"/>
        <label>2</label>
    </ligand>
</feature>
<feature type="modified residue" description="Cysteine sulfenic acid (-SOH)" evidence="1">
    <location>
        <position position="283"/>
    </location>
</feature>
<accession>B0CKN3</accession>
<keyword id="KW-0479">Metal-binding</keyword>
<keyword id="KW-0520">NAD</keyword>
<keyword id="KW-0521">NADP</keyword>
<keyword id="KW-0558">Oxidation</keyword>
<keyword id="KW-0560">Oxidoreductase</keyword>
<keyword id="KW-0630">Potassium</keyword>
<dbReference type="EC" id="1.2.1.8" evidence="1"/>
<dbReference type="EMBL" id="CP000911">
    <property type="protein sequence ID" value="ABY37663.1"/>
    <property type="molecule type" value="Genomic_DNA"/>
</dbReference>
<dbReference type="RefSeq" id="WP_006072340.1">
    <property type="nucleotide sequence ID" value="NC_010169.1"/>
</dbReference>
<dbReference type="SMR" id="B0CKN3"/>
<dbReference type="KEGG" id="bmt:BSUIS_A0580"/>
<dbReference type="HOGENOM" id="CLU_005391_0_1_5"/>
<dbReference type="UniPathway" id="UPA00529">
    <property type="reaction ID" value="UER00386"/>
</dbReference>
<dbReference type="Proteomes" id="UP000008545">
    <property type="component" value="Chromosome I"/>
</dbReference>
<dbReference type="GO" id="GO:0008802">
    <property type="term" value="F:betaine-aldehyde dehydrogenase (NAD+) activity"/>
    <property type="evidence" value="ECO:0007669"/>
    <property type="project" value="UniProtKB-UniRule"/>
</dbReference>
<dbReference type="GO" id="GO:0046872">
    <property type="term" value="F:metal ion binding"/>
    <property type="evidence" value="ECO:0007669"/>
    <property type="project" value="UniProtKB-KW"/>
</dbReference>
<dbReference type="GO" id="GO:0019285">
    <property type="term" value="P:glycine betaine biosynthetic process from choline"/>
    <property type="evidence" value="ECO:0007669"/>
    <property type="project" value="UniProtKB-UniRule"/>
</dbReference>
<dbReference type="CDD" id="cd07090">
    <property type="entry name" value="ALDH_F9_TMBADH"/>
    <property type="match status" value="1"/>
</dbReference>
<dbReference type="FunFam" id="3.40.605.10:FF:000026">
    <property type="entry name" value="Aldehyde dehydrogenase, putative"/>
    <property type="match status" value="1"/>
</dbReference>
<dbReference type="FunFam" id="3.40.309.10:FF:000014">
    <property type="entry name" value="NAD/NADP-dependent betaine aldehyde dehydrogenase"/>
    <property type="match status" value="1"/>
</dbReference>
<dbReference type="FunFam" id="3.40.605.10:FF:000007">
    <property type="entry name" value="NAD/NADP-dependent betaine aldehyde dehydrogenase"/>
    <property type="match status" value="1"/>
</dbReference>
<dbReference type="Gene3D" id="3.40.605.10">
    <property type="entry name" value="Aldehyde Dehydrogenase, Chain A, domain 1"/>
    <property type="match status" value="1"/>
</dbReference>
<dbReference type="Gene3D" id="3.40.309.10">
    <property type="entry name" value="Aldehyde Dehydrogenase, Chain A, domain 2"/>
    <property type="match status" value="1"/>
</dbReference>
<dbReference type="HAMAP" id="MF_00804">
    <property type="entry name" value="BADH"/>
    <property type="match status" value="1"/>
</dbReference>
<dbReference type="InterPro" id="IPR016161">
    <property type="entry name" value="Ald_DH/histidinol_DH"/>
</dbReference>
<dbReference type="InterPro" id="IPR016163">
    <property type="entry name" value="Ald_DH_C"/>
</dbReference>
<dbReference type="InterPro" id="IPR016160">
    <property type="entry name" value="Ald_DH_CS_CYS"/>
</dbReference>
<dbReference type="InterPro" id="IPR029510">
    <property type="entry name" value="Ald_DH_CS_GLU"/>
</dbReference>
<dbReference type="InterPro" id="IPR016162">
    <property type="entry name" value="Ald_DH_N"/>
</dbReference>
<dbReference type="InterPro" id="IPR015590">
    <property type="entry name" value="Aldehyde_DH_dom"/>
</dbReference>
<dbReference type="InterPro" id="IPR011264">
    <property type="entry name" value="BADH"/>
</dbReference>
<dbReference type="NCBIfam" id="TIGR01804">
    <property type="entry name" value="BADH"/>
    <property type="match status" value="1"/>
</dbReference>
<dbReference type="NCBIfam" id="NF009725">
    <property type="entry name" value="PRK13252.1"/>
    <property type="match status" value="1"/>
</dbReference>
<dbReference type="PANTHER" id="PTHR11699">
    <property type="entry name" value="ALDEHYDE DEHYDROGENASE-RELATED"/>
    <property type="match status" value="1"/>
</dbReference>
<dbReference type="Pfam" id="PF00171">
    <property type="entry name" value="Aldedh"/>
    <property type="match status" value="1"/>
</dbReference>
<dbReference type="SUPFAM" id="SSF53720">
    <property type="entry name" value="ALDH-like"/>
    <property type="match status" value="1"/>
</dbReference>
<dbReference type="PROSITE" id="PS00070">
    <property type="entry name" value="ALDEHYDE_DEHYDR_CYS"/>
    <property type="match status" value="1"/>
</dbReference>
<dbReference type="PROSITE" id="PS00687">
    <property type="entry name" value="ALDEHYDE_DEHYDR_GLU"/>
    <property type="match status" value="1"/>
</dbReference>
<sequence length="487" mass="52077">MKAQPKASHFIGGAFVEDKAGKPPPVIYPATDEEIASLYSATPGIIEAAYAAALKAQGEWAALKPVERGRILRRTAEILREKNRKLSKLETLDTGKALQETLVADAASAADALEFFGGIISGFNGEFVELGGSFAYTRREALGICVGIGAWNYPIQIAAWKSAPALAMGNAFIFKPSENTPLSALALAEAYKEAGLPDGLFNVVQGYGDVGAALVNHRLTAKVSLTGSVPTGRRIMAQAGEQLKHVTMELGGKSPLIVFDDADLESAIGGAMLGNFYSTGQVCSNGTRVFVHKNIRERFIERLVERTRKIRIGDPFDEATQMGPLISAAQRDKVLSYIKKGKAEGATLACGGGVPKLQGFDKGFFIEPTVFADVTDTMTIAREEIFGPVMSVLEFSDEDEVIARANDSEFGLAAGVFTADLSRGHHVIGQIKAGTCWINAYNLTPVEVPFGGYKQSGIGRENGIAALAHYSQIKTVYVEMGKVDSPY</sequence>
<proteinExistence type="inferred from homology"/>
<name>BETB_BRUSI</name>
<reference key="1">
    <citation type="submission" date="2007-12" db="EMBL/GenBank/DDBJ databases">
        <title>Brucella suis ATCC 23445 whole genome shotgun sequencing project.</title>
        <authorList>
            <person name="Setubal J.C."/>
            <person name="Bowns C."/>
            <person name="Boyle S."/>
            <person name="Crasta O.R."/>
            <person name="Czar M.J."/>
            <person name="Dharmanolla C."/>
            <person name="Gillespie J.J."/>
            <person name="Kenyon R.W."/>
            <person name="Lu J."/>
            <person name="Mane S."/>
            <person name="Mohapatra S."/>
            <person name="Nagrani S."/>
            <person name="Purkayastha A."/>
            <person name="Rajasimha H.K."/>
            <person name="Shallom J.M."/>
            <person name="Shallom S."/>
            <person name="Shukla M."/>
            <person name="Snyder E.E."/>
            <person name="Sobral B.W."/>
            <person name="Wattam A.R."/>
            <person name="Will R."/>
            <person name="Williams K."/>
            <person name="Yoo H."/>
            <person name="Bruce D."/>
            <person name="Detter C."/>
            <person name="Munk C."/>
            <person name="Brettin T.S."/>
        </authorList>
    </citation>
    <scope>NUCLEOTIDE SEQUENCE [LARGE SCALE GENOMIC DNA]</scope>
    <source>
        <strain>ATCC 23445 / NCTC 10510</strain>
    </source>
</reference>
<evidence type="ECO:0000255" key="1">
    <source>
        <dbReference type="HAMAP-Rule" id="MF_00804"/>
    </source>
</evidence>
<gene>
    <name evidence="1" type="primary">betB</name>
    <name type="ordered locus">BSUIS_A0580</name>
</gene>
<protein>
    <recommendedName>
        <fullName evidence="1">Betaine aldehyde dehydrogenase</fullName>
        <shortName evidence="1">BADH</shortName>
        <ecNumber evidence="1">1.2.1.8</ecNumber>
    </recommendedName>
</protein>
<organism>
    <name type="scientific">Brucella suis (strain ATCC 23445 / NCTC 10510)</name>
    <dbReference type="NCBI Taxonomy" id="470137"/>
    <lineage>
        <taxon>Bacteria</taxon>
        <taxon>Pseudomonadati</taxon>
        <taxon>Pseudomonadota</taxon>
        <taxon>Alphaproteobacteria</taxon>
        <taxon>Hyphomicrobiales</taxon>
        <taxon>Brucellaceae</taxon>
        <taxon>Brucella/Ochrobactrum group</taxon>
        <taxon>Brucella</taxon>
    </lineage>
</organism>